<gene>
    <name type="primary">rpsS</name>
    <name type="ordered locus">spr0192</name>
</gene>
<proteinExistence type="inferred from homology"/>
<accession>P0A4B6</accession>
<accession>Q9WW12</accession>
<feature type="chain" id="PRO_0000129913" description="Small ribosomal subunit protein uS19">
    <location>
        <begin position="1"/>
        <end position="93"/>
    </location>
</feature>
<reference key="1">
    <citation type="journal article" date="2000" name="Antimicrob. Agents Chemother.">
        <title>Mutations in ribosomal protein L16 conferring reduced susceptibility to evernimicin (SCH27899): implications for mechanism of action.</title>
        <authorList>
            <person name="Adrian P.V."/>
            <person name="Zhao W."/>
            <person name="Black T.A."/>
            <person name="Shaw K.J."/>
            <person name="Hare R.S."/>
            <person name="Klugman K.P."/>
        </authorList>
    </citation>
    <scope>NUCLEOTIDE SEQUENCE [GENOMIC DNA]</scope>
</reference>
<reference key="2">
    <citation type="journal article" date="2001" name="J. Bacteriol.">
        <title>Genome of the bacterium Streptococcus pneumoniae strain R6.</title>
        <authorList>
            <person name="Hoskins J."/>
            <person name="Alborn W.E. Jr."/>
            <person name="Arnold J."/>
            <person name="Blaszczak L.C."/>
            <person name="Burgett S."/>
            <person name="DeHoff B.S."/>
            <person name="Estrem S.T."/>
            <person name="Fritz L."/>
            <person name="Fu D.-J."/>
            <person name="Fuller W."/>
            <person name="Geringer C."/>
            <person name="Gilmour R."/>
            <person name="Glass J.S."/>
            <person name="Khoja H."/>
            <person name="Kraft A.R."/>
            <person name="Lagace R.E."/>
            <person name="LeBlanc D.J."/>
            <person name="Lee L.N."/>
            <person name="Lefkowitz E.J."/>
            <person name="Lu J."/>
            <person name="Matsushima P."/>
            <person name="McAhren S.M."/>
            <person name="McHenney M."/>
            <person name="McLeaster K."/>
            <person name="Mundy C.W."/>
            <person name="Nicas T.I."/>
            <person name="Norris F.H."/>
            <person name="O'Gara M."/>
            <person name="Peery R.B."/>
            <person name="Robertson G.T."/>
            <person name="Rockey P."/>
            <person name="Sun P.-M."/>
            <person name="Winkler M.E."/>
            <person name="Yang Y."/>
            <person name="Young-Bellido M."/>
            <person name="Zhao G."/>
            <person name="Zook C.A."/>
            <person name="Baltz R.H."/>
            <person name="Jaskunas S.R."/>
            <person name="Rosteck P.R. Jr."/>
            <person name="Skatrud P.L."/>
            <person name="Glass J.I."/>
        </authorList>
    </citation>
    <scope>NUCLEOTIDE SEQUENCE [LARGE SCALE GENOMIC DNA]</scope>
    <source>
        <strain>ATCC BAA-255 / R6</strain>
    </source>
</reference>
<keyword id="KW-1185">Reference proteome</keyword>
<keyword id="KW-0687">Ribonucleoprotein</keyword>
<keyword id="KW-0689">Ribosomal protein</keyword>
<keyword id="KW-0694">RNA-binding</keyword>
<keyword id="KW-0699">rRNA-binding</keyword>
<name>RS19_STRR6</name>
<evidence type="ECO:0000250" key="1"/>
<evidence type="ECO:0000305" key="2"/>
<dbReference type="EMBL" id="AF126059">
    <property type="protein sequence ID" value="AAD33260.1"/>
    <property type="molecule type" value="Genomic_DNA"/>
</dbReference>
<dbReference type="EMBL" id="AE007317">
    <property type="protein sequence ID" value="AAK98996.1"/>
    <property type="molecule type" value="Genomic_DNA"/>
</dbReference>
<dbReference type="PIR" id="H97895">
    <property type="entry name" value="H97895"/>
</dbReference>
<dbReference type="RefSeq" id="NP_357786.1">
    <property type="nucleotide sequence ID" value="NC_003098.1"/>
</dbReference>
<dbReference type="RefSeq" id="WP_000533766.1">
    <property type="nucleotide sequence ID" value="NC_003098.1"/>
</dbReference>
<dbReference type="SMR" id="P0A4B6"/>
<dbReference type="STRING" id="171101.spr0192"/>
<dbReference type="GeneID" id="93920908"/>
<dbReference type="KEGG" id="spr:spr0192"/>
<dbReference type="PATRIC" id="fig|171101.6.peg.224"/>
<dbReference type="eggNOG" id="COG0185">
    <property type="taxonomic scope" value="Bacteria"/>
</dbReference>
<dbReference type="HOGENOM" id="CLU_144911_0_1_9"/>
<dbReference type="PRO" id="PR:P0A4B6"/>
<dbReference type="Proteomes" id="UP000000586">
    <property type="component" value="Chromosome"/>
</dbReference>
<dbReference type="GO" id="GO:0005737">
    <property type="term" value="C:cytoplasm"/>
    <property type="evidence" value="ECO:0007669"/>
    <property type="project" value="UniProtKB-ARBA"/>
</dbReference>
<dbReference type="GO" id="GO:0015935">
    <property type="term" value="C:small ribosomal subunit"/>
    <property type="evidence" value="ECO:0007669"/>
    <property type="project" value="InterPro"/>
</dbReference>
<dbReference type="GO" id="GO:0019843">
    <property type="term" value="F:rRNA binding"/>
    <property type="evidence" value="ECO:0007669"/>
    <property type="project" value="UniProtKB-UniRule"/>
</dbReference>
<dbReference type="GO" id="GO:0003735">
    <property type="term" value="F:structural constituent of ribosome"/>
    <property type="evidence" value="ECO:0000318"/>
    <property type="project" value="GO_Central"/>
</dbReference>
<dbReference type="GO" id="GO:0000028">
    <property type="term" value="P:ribosomal small subunit assembly"/>
    <property type="evidence" value="ECO:0000318"/>
    <property type="project" value="GO_Central"/>
</dbReference>
<dbReference type="GO" id="GO:0006412">
    <property type="term" value="P:translation"/>
    <property type="evidence" value="ECO:0007669"/>
    <property type="project" value="UniProtKB-UniRule"/>
</dbReference>
<dbReference type="FunFam" id="3.30.860.10:FF:000001">
    <property type="entry name" value="30S ribosomal protein S19"/>
    <property type="match status" value="1"/>
</dbReference>
<dbReference type="Gene3D" id="3.30.860.10">
    <property type="entry name" value="30s Ribosomal Protein S19, Chain A"/>
    <property type="match status" value="1"/>
</dbReference>
<dbReference type="HAMAP" id="MF_00531">
    <property type="entry name" value="Ribosomal_uS19"/>
    <property type="match status" value="1"/>
</dbReference>
<dbReference type="InterPro" id="IPR002222">
    <property type="entry name" value="Ribosomal_uS19"/>
</dbReference>
<dbReference type="InterPro" id="IPR005732">
    <property type="entry name" value="Ribosomal_uS19_bac-type"/>
</dbReference>
<dbReference type="InterPro" id="IPR020934">
    <property type="entry name" value="Ribosomal_uS19_CS"/>
</dbReference>
<dbReference type="InterPro" id="IPR023575">
    <property type="entry name" value="Ribosomal_uS19_SF"/>
</dbReference>
<dbReference type="NCBIfam" id="TIGR01050">
    <property type="entry name" value="rpsS_bact"/>
    <property type="match status" value="1"/>
</dbReference>
<dbReference type="PANTHER" id="PTHR11880">
    <property type="entry name" value="RIBOSOMAL PROTEIN S19P FAMILY MEMBER"/>
    <property type="match status" value="1"/>
</dbReference>
<dbReference type="PANTHER" id="PTHR11880:SF8">
    <property type="entry name" value="SMALL RIBOSOMAL SUBUNIT PROTEIN US19M"/>
    <property type="match status" value="1"/>
</dbReference>
<dbReference type="Pfam" id="PF00203">
    <property type="entry name" value="Ribosomal_S19"/>
    <property type="match status" value="1"/>
</dbReference>
<dbReference type="PIRSF" id="PIRSF002144">
    <property type="entry name" value="Ribosomal_S19"/>
    <property type="match status" value="1"/>
</dbReference>
<dbReference type="PRINTS" id="PR00975">
    <property type="entry name" value="RIBOSOMALS19"/>
</dbReference>
<dbReference type="SUPFAM" id="SSF54570">
    <property type="entry name" value="Ribosomal protein S19"/>
    <property type="match status" value="1"/>
</dbReference>
<dbReference type="PROSITE" id="PS00323">
    <property type="entry name" value="RIBOSOMAL_S19"/>
    <property type="match status" value="1"/>
</dbReference>
<sequence length="93" mass="10750">MGRSLKKGPFVDEHLMKKVEAQANDEKKKVIKTWSRRSTIFPSFIGYTIAVYDGRKHVPVYIQEDMVGHKLGEFAPTRTYKGHAADDKKTRRK</sequence>
<comment type="function">
    <text evidence="1">Protein S19 forms a complex with S13 that binds strongly to the 16S ribosomal RNA.</text>
</comment>
<comment type="similarity">
    <text evidence="2">Belongs to the universal ribosomal protein uS19 family.</text>
</comment>
<protein>
    <recommendedName>
        <fullName evidence="2">Small ribosomal subunit protein uS19</fullName>
    </recommendedName>
    <alternativeName>
        <fullName>30S ribosomal protein S19</fullName>
    </alternativeName>
</protein>
<organism>
    <name type="scientific">Streptococcus pneumoniae (strain ATCC BAA-255 / R6)</name>
    <dbReference type="NCBI Taxonomy" id="171101"/>
    <lineage>
        <taxon>Bacteria</taxon>
        <taxon>Bacillati</taxon>
        <taxon>Bacillota</taxon>
        <taxon>Bacilli</taxon>
        <taxon>Lactobacillales</taxon>
        <taxon>Streptococcaceae</taxon>
        <taxon>Streptococcus</taxon>
    </lineage>
</organism>